<name>DMP2_ARATH</name>
<proteinExistence type="evidence at transcript level"/>
<gene>
    <name evidence="4" type="primary">DMP2</name>
    <name evidence="6" type="ordered locus">At3g21550</name>
    <name evidence="7" type="ORF">MIL23.12</name>
</gene>
<evidence type="ECO:0000250" key="1">
    <source>
        <dbReference type="UniProtKB" id="Q9LVF4"/>
    </source>
</evidence>
<evidence type="ECO:0000255" key="2"/>
<evidence type="ECO:0000269" key="3">
    <source>
    </source>
</evidence>
<evidence type="ECO:0000303" key="4">
    <source>
    </source>
</evidence>
<evidence type="ECO:0000305" key="5"/>
<evidence type="ECO:0000312" key="6">
    <source>
        <dbReference type="Araport" id="AT3G21550"/>
    </source>
</evidence>
<evidence type="ECO:0000312" key="7">
    <source>
        <dbReference type="EMBL" id="BAB02350.1"/>
    </source>
</evidence>
<comment type="function">
    <text evidence="1">Involved in membrane remodeling.</text>
</comment>
<comment type="subcellular location">
    <subcellularLocation>
        <location evidence="3">Endoplasmic reticulum membrane</location>
        <topology evidence="2">Multi-pass membrane protein</topology>
    </subcellularLocation>
    <subcellularLocation>
        <location evidence="3">Vacuole membrane</location>
        <topology evidence="2">Multi-pass membrane protein</topology>
    </subcellularLocation>
</comment>
<comment type="tissue specificity">
    <text evidence="3">Expressed constitutively in leaves, stems, flowers, siliques and roots.</text>
</comment>
<comment type="developmental stage">
    <text evidence="3">Accumulates in tissues undergoing abscission.</text>
</comment>
<comment type="similarity">
    <text evidence="5">Belongs to the plant DMP1 protein family.</text>
</comment>
<keyword id="KW-0256">Endoplasmic reticulum</keyword>
<keyword id="KW-0472">Membrane</keyword>
<keyword id="KW-1185">Reference proteome</keyword>
<keyword id="KW-0812">Transmembrane</keyword>
<keyword id="KW-1133">Transmembrane helix</keyword>
<keyword id="KW-0926">Vacuole</keyword>
<organism>
    <name type="scientific">Arabidopsis thaliana</name>
    <name type="common">Mouse-ear cress</name>
    <dbReference type="NCBI Taxonomy" id="3702"/>
    <lineage>
        <taxon>Eukaryota</taxon>
        <taxon>Viridiplantae</taxon>
        <taxon>Streptophyta</taxon>
        <taxon>Embryophyta</taxon>
        <taxon>Tracheophyta</taxon>
        <taxon>Spermatophyta</taxon>
        <taxon>Magnoliopsida</taxon>
        <taxon>eudicotyledons</taxon>
        <taxon>Gunneridae</taxon>
        <taxon>Pentapetalae</taxon>
        <taxon>rosids</taxon>
        <taxon>malvids</taxon>
        <taxon>Brassicales</taxon>
        <taxon>Brassicaceae</taxon>
        <taxon>Camelineae</taxon>
        <taxon>Arabidopsis</taxon>
    </lineage>
</organism>
<feature type="chain" id="PRO_0000441609" description="Protein DMP2">
    <location>
        <begin position="1"/>
        <end position="184"/>
    </location>
</feature>
<feature type="transmembrane region" description="Helical" evidence="2">
    <location>
        <begin position="19"/>
        <end position="39"/>
    </location>
</feature>
<feature type="transmembrane region" description="Helical" evidence="2">
    <location>
        <begin position="45"/>
        <end position="65"/>
    </location>
</feature>
<feature type="transmembrane region" description="Helical" evidence="2">
    <location>
        <begin position="105"/>
        <end position="125"/>
    </location>
</feature>
<feature type="transmembrane region" description="Helical" evidence="2">
    <location>
        <begin position="142"/>
        <end position="162"/>
    </location>
</feature>
<protein>
    <recommendedName>
        <fullName evidence="4">Protein DMP2</fullName>
        <shortName evidence="4">AtDMP2</shortName>
    </recommendedName>
</protein>
<sequence length="184" mass="20166">MSKTFKAIRDRTYSGVGDLIKLLPTGTVFLFQFLNPVLTNNGHCLLINKYLTGVLIVICAFSCCFTCFTDSYRTRDGYVHYGVATVKGLWPDSSSVDLSSKRLRVGDFVHAFFSLIVFSVISLLDANTVNCFYPGFGSAGKIFLMVLPPVIGVISGAVFTVFPSRRHGIGNPSDHSEDDASEMK</sequence>
<dbReference type="EMBL" id="AB019232">
    <property type="protein sequence ID" value="BAB02350.1"/>
    <property type="molecule type" value="Genomic_DNA"/>
</dbReference>
<dbReference type="EMBL" id="CP002686">
    <property type="protein sequence ID" value="AEE76522.1"/>
    <property type="molecule type" value="Genomic_DNA"/>
</dbReference>
<dbReference type="EMBL" id="AY052198">
    <property type="protein sequence ID" value="AAK97669.1"/>
    <property type="molecule type" value="mRNA"/>
</dbReference>
<dbReference type="EMBL" id="AY060489">
    <property type="protein sequence ID" value="AAL31102.1"/>
    <property type="molecule type" value="mRNA"/>
</dbReference>
<dbReference type="RefSeq" id="NP_566687.1">
    <property type="nucleotide sequence ID" value="NM_113050.3"/>
</dbReference>
<dbReference type="FunCoup" id="Q9LVF1">
    <property type="interactions" value="394"/>
</dbReference>
<dbReference type="STRING" id="3702.Q9LVF1"/>
<dbReference type="PaxDb" id="3702-AT3G21550.1"/>
<dbReference type="ProteomicsDB" id="224169"/>
<dbReference type="EnsemblPlants" id="AT3G21550.1">
    <property type="protein sequence ID" value="AT3G21550.1"/>
    <property type="gene ID" value="AT3G21550"/>
</dbReference>
<dbReference type="GeneID" id="821709"/>
<dbReference type="Gramene" id="AT3G21550.1">
    <property type="protein sequence ID" value="AT3G21550.1"/>
    <property type="gene ID" value="AT3G21550"/>
</dbReference>
<dbReference type="KEGG" id="ath:AT3G21550"/>
<dbReference type="Araport" id="AT3G21550"/>
<dbReference type="TAIR" id="AT3G21550">
    <property type="gene designation" value="DMP2"/>
</dbReference>
<dbReference type="eggNOG" id="ENOG502RXHQ">
    <property type="taxonomic scope" value="Eukaryota"/>
</dbReference>
<dbReference type="HOGENOM" id="CLU_075936_1_0_1"/>
<dbReference type="InParanoid" id="Q9LVF1"/>
<dbReference type="OMA" id="LSERTMM"/>
<dbReference type="OrthoDB" id="1928191at2759"/>
<dbReference type="PhylomeDB" id="Q9LVF1"/>
<dbReference type="PRO" id="PR:Q9LVF1"/>
<dbReference type="Proteomes" id="UP000006548">
    <property type="component" value="Chromosome 3"/>
</dbReference>
<dbReference type="ExpressionAtlas" id="Q9LVF1">
    <property type="expression patterns" value="baseline and differential"/>
</dbReference>
<dbReference type="GO" id="GO:0005783">
    <property type="term" value="C:endoplasmic reticulum"/>
    <property type="evidence" value="ECO:0000314"/>
    <property type="project" value="TAIR"/>
</dbReference>
<dbReference type="GO" id="GO:0005789">
    <property type="term" value="C:endoplasmic reticulum membrane"/>
    <property type="evidence" value="ECO:0007669"/>
    <property type="project" value="UniProtKB-SubCell"/>
</dbReference>
<dbReference type="GO" id="GO:0009705">
    <property type="term" value="C:plant-type vacuole membrane"/>
    <property type="evidence" value="ECO:0000314"/>
    <property type="project" value="TAIR"/>
</dbReference>
<dbReference type="GO" id="GO:0009838">
    <property type="term" value="P:abscission"/>
    <property type="evidence" value="ECO:0000270"/>
    <property type="project" value="UniProtKB"/>
</dbReference>
<dbReference type="GO" id="GO:0010256">
    <property type="term" value="P:endomembrane system organization"/>
    <property type="evidence" value="ECO:0000250"/>
    <property type="project" value="UniProtKB"/>
</dbReference>
<dbReference type="InterPro" id="IPR007770">
    <property type="entry name" value="DMP"/>
</dbReference>
<dbReference type="PANTHER" id="PTHR31621:SF66">
    <property type="entry name" value="PROTEIN DMP2"/>
    <property type="match status" value="1"/>
</dbReference>
<dbReference type="PANTHER" id="PTHR31621">
    <property type="entry name" value="PROTEIN DMP3"/>
    <property type="match status" value="1"/>
</dbReference>
<dbReference type="Pfam" id="PF05078">
    <property type="entry name" value="DUF679"/>
    <property type="match status" value="1"/>
</dbReference>
<reference key="1">
    <citation type="journal article" date="2000" name="DNA Res.">
        <title>Structural analysis of Arabidopsis thaliana chromosome 3. I. Sequence features of the regions of 4,504,864 bp covered by sixty P1 and TAC clones.</title>
        <authorList>
            <person name="Sato S."/>
            <person name="Nakamura Y."/>
            <person name="Kaneko T."/>
            <person name="Katoh T."/>
            <person name="Asamizu E."/>
            <person name="Tabata S."/>
        </authorList>
    </citation>
    <scope>NUCLEOTIDE SEQUENCE [LARGE SCALE GENOMIC DNA]</scope>
    <source>
        <strain>cv. Columbia</strain>
    </source>
</reference>
<reference key="2">
    <citation type="journal article" date="2017" name="Plant J.">
        <title>Araport11: a complete reannotation of the Arabidopsis thaliana reference genome.</title>
        <authorList>
            <person name="Cheng C.Y."/>
            <person name="Krishnakumar V."/>
            <person name="Chan A.P."/>
            <person name="Thibaud-Nissen F."/>
            <person name="Schobel S."/>
            <person name="Town C.D."/>
        </authorList>
    </citation>
    <scope>GENOME REANNOTATION</scope>
    <source>
        <strain>cv. Columbia</strain>
    </source>
</reference>
<reference key="3">
    <citation type="journal article" date="2003" name="Science">
        <title>Empirical analysis of transcriptional activity in the Arabidopsis genome.</title>
        <authorList>
            <person name="Yamada K."/>
            <person name="Lim J."/>
            <person name="Dale J.M."/>
            <person name="Chen H."/>
            <person name="Shinn P."/>
            <person name="Palm C.J."/>
            <person name="Southwick A.M."/>
            <person name="Wu H.C."/>
            <person name="Kim C.J."/>
            <person name="Nguyen M."/>
            <person name="Pham P.K."/>
            <person name="Cheuk R.F."/>
            <person name="Karlin-Newmann G."/>
            <person name="Liu S.X."/>
            <person name="Lam B."/>
            <person name="Sakano H."/>
            <person name="Wu T."/>
            <person name="Yu G."/>
            <person name="Miranda M."/>
            <person name="Quach H.L."/>
            <person name="Tripp M."/>
            <person name="Chang C.H."/>
            <person name="Lee J.M."/>
            <person name="Toriumi M.J."/>
            <person name="Chan M.M."/>
            <person name="Tang C.C."/>
            <person name="Onodera C.S."/>
            <person name="Deng J.M."/>
            <person name="Akiyama K."/>
            <person name="Ansari Y."/>
            <person name="Arakawa T."/>
            <person name="Banh J."/>
            <person name="Banno F."/>
            <person name="Bowser L."/>
            <person name="Brooks S.Y."/>
            <person name="Carninci P."/>
            <person name="Chao Q."/>
            <person name="Choy N."/>
            <person name="Enju A."/>
            <person name="Goldsmith A.D."/>
            <person name="Gurjal M."/>
            <person name="Hansen N.F."/>
            <person name="Hayashizaki Y."/>
            <person name="Johnson-Hopson C."/>
            <person name="Hsuan V.W."/>
            <person name="Iida K."/>
            <person name="Karnes M."/>
            <person name="Khan S."/>
            <person name="Koesema E."/>
            <person name="Ishida J."/>
            <person name="Jiang P.X."/>
            <person name="Jones T."/>
            <person name="Kawai J."/>
            <person name="Kamiya A."/>
            <person name="Meyers C."/>
            <person name="Nakajima M."/>
            <person name="Narusaka M."/>
            <person name="Seki M."/>
            <person name="Sakurai T."/>
            <person name="Satou M."/>
            <person name="Tamse R."/>
            <person name="Vaysberg M."/>
            <person name="Wallender E.K."/>
            <person name="Wong C."/>
            <person name="Yamamura Y."/>
            <person name="Yuan S."/>
            <person name="Shinozaki K."/>
            <person name="Davis R.W."/>
            <person name="Theologis A."/>
            <person name="Ecker J.R."/>
        </authorList>
    </citation>
    <scope>NUCLEOTIDE SEQUENCE [LARGE SCALE MRNA]</scope>
    <source>
        <strain>cv. Columbia</strain>
    </source>
</reference>
<reference key="4">
    <citation type="journal article" date="2010" name="Plant Biol. 12 Suppl.">
        <title>Expression, localisation and phylogeny of a novel family of plant-specific membrane proteins.</title>
        <authorList>
            <person name="Kasaras A."/>
            <person name="Kunze R."/>
        </authorList>
    </citation>
    <scope>DEVELOPMENTAL STAGE</scope>
    <scope>TISSUE SPECIFICITY</scope>
    <scope>SUBCELLULAR LOCATION</scope>
    <scope>GENE FAMILY</scope>
    <scope>NOMENCLATURE</scope>
    <source>
        <strain>cv. Columbia</strain>
    </source>
</reference>
<accession>Q9LVF1</accession>